<comment type="catalytic activity">
    <reaction evidence="1">
        <text>(S)-4-amino-5-oxopentanoate = 5-aminolevulinate</text>
        <dbReference type="Rhea" id="RHEA:14265"/>
        <dbReference type="ChEBI" id="CHEBI:57501"/>
        <dbReference type="ChEBI" id="CHEBI:356416"/>
        <dbReference type="EC" id="5.4.3.8"/>
    </reaction>
</comment>
<comment type="cofactor">
    <cofactor evidence="1">
        <name>pyridoxal 5'-phosphate</name>
        <dbReference type="ChEBI" id="CHEBI:597326"/>
    </cofactor>
</comment>
<comment type="pathway">
    <text evidence="1">Porphyrin-containing compound metabolism; protoporphyrin-IX biosynthesis; 5-aminolevulinate from L-glutamyl-tRNA(Glu): step 2/2.</text>
</comment>
<comment type="subcellular location">
    <subcellularLocation>
        <location evidence="1">Cytoplasm</location>
    </subcellularLocation>
</comment>
<comment type="similarity">
    <text evidence="1">Belongs to the class-III pyridoxal-phosphate-dependent aminotransferase family. HemL subfamily.</text>
</comment>
<accession>Q4JAM7</accession>
<keyword id="KW-0963">Cytoplasm</keyword>
<keyword id="KW-0413">Isomerase</keyword>
<keyword id="KW-0627">Porphyrin biosynthesis</keyword>
<keyword id="KW-0663">Pyridoxal phosphate</keyword>
<keyword id="KW-1185">Reference proteome</keyword>
<organism>
    <name type="scientific">Sulfolobus acidocaldarius (strain ATCC 33909 / DSM 639 / JCM 8929 / NBRC 15157 / NCIMB 11770)</name>
    <dbReference type="NCBI Taxonomy" id="330779"/>
    <lineage>
        <taxon>Archaea</taxon>
        <taxon>Thermoproteota</taxon>
        <taxon>Thermoprotei</taxon>
        <taxon>Sulfolobales</taxon>
        <taxon>Sulfolobaceae</taxon>
        <taxon>Sulfolobus</taxon>
    </lineage>
</organism>
<proteinExistence type="inferred from homology"/>
<sequence length="420" mass="46527">MSEKYWNIASHYFAGGVNSPVRAAVKPYPFYVERAEGAYLYTADNKQLIDYVLGYGPLILGHANQYVTKKIIEQVNKGWLYGTPSPIEIELARKISHHLPSAQKIRFVNSGTEATMLALRLARAYTGREKIIKFHGNYHGAHDYLLLDAGSAFTEFNVNVYNGIPKSIVNTIRICEYNDAECVEKLSKSEDIAGVIVEPVMGNMGVILPDKDFLERLREITLTYNSVLIFDEVITGFRLGLGGAQGTFNVTPDLTTLGKIIGGGLPIGAVAGKKEIIDMLTPAGKVFNAGTFNANPLTMTAGLATIEVLERENVHEVANRAVNVILEELVNALDKKIPNNFVINHIGSMFQVFFGVKKVSNATEAKLANKEMYQKFHNLLLQRGVFIPPSQFETIFTSYAHKDVVVNTTLEILRKVVQEL</sequence>
<feature type="chain" id="PRO_0000120489" description="Glutamate-1-semialdehyde 2,1-aminomutase">
    <location>
        <begin position="1"/>
        <end position="420"/>
    </location>
</feature>
<feature type="modified residue" description="N6-(pyridoxal phosphate)lysine" evidence="1">
    <location>
        <position position="259"/>
    </location>
</feature>
<reference key="1">
    <citation type="journal article" date="2005" name="J. Bacteriol.">
        <title>The genome of Sulfolobus acidocaldarius, a model organism of the Crenarchaeota.</title>
        <authorList>
            <person name="Chen L."/>
            <person name="Bruegger K."/>
            <person name="Skovgaard M."/>
            <person name="Redder P."/>
            <person name="She Q."/>
            <person name="Torarinsson E."/>
            <person name="Greve B."/>
            <person name="Awayez M."/>
            <person name="Zibat A."/>
            <person name="Klenk H.-P."/>
            <person name="Garrett R.A."/>
        </authorList>
    </citation>
    <scope>NUCLEOTIDE SEQUENCE [LARGE SCALE GENOMIC DNA]</scope>
    <source>
        <strain>ATCC 33909 / DSM 639 / JCM 8929 / NBRC 15157 / NCIMB 11770</strain>
    </source>
</reference>
<dbReference type="EC" id="5.4.3.8" evidence="1"/>
<dbReference type="EMBL" id="CP000077">
    <property type="protein sequence ID" value="AAY80152.1"/>
    <property type="molecule type" value="Genomic_DNA"/>
</dbReference>
<dbReference type="RefSeq" id="WP_011277654.1">
    <property type="nucleotide sequence ID" value="NC_007181.1"/>
</dbReference>
<dbReference type="SMR" id="Q4JAM7"/>
<dbReference type="STRING" id="330779.Saci_0779"/>
<dbReference type="GeneID" id="14551295"/>
<dbReference type="KEGG" id="sai:Saci_0779"/>
<dbReference type="PATRIC" id="fig|330779.12.peg.745"/>
<dbReference type="eggNOG" id="arCOG00918">
    <property type="taxonomic scope" value="Archaea"/>
</dbReference>
<dbReference type="HOGENOM" id="CLU_016922_1_5_2"/>
<dbReference type="UniPathway" id="UPA00251">
    <property type="reaction ID" value="UER00317"/>
</dbReference>
<dbReference type="Proteomes" id="UP000001018">
    <property type="component" value="Chromosome"/>
</dbReference>
<dbReference type="GO" id="GO:0005737">
    <property type="term" value="C:cytoplasm"/>
    <property type="evidence" value="ECO:0007669"/>
    <property type="project" value="UniProtKB-SubCell"/>
</dbReference>
<dbReference type="GO" id="GO:0042286">
    <property type="term" value="F:glutamate-1-semialdehyde 2,1-aminomutase activity"/>
    <property type="evidence" value="ECO:0007669"/>
    <property type="project" value="UniProtKB-UniRule"/>
</dbReference>
<dbReference type="GO" id="GO:0030170">
    <property type="term" value="F:pyridoxal phosphate binding"/>
    <property type="evidence" value="ECO:0007669"/>
    <property type="project" value="InterPro"/>
</dbReference>
<dbReference type="GO" id="GO:0008483">
    <property type="term" value="F:transaminase activity"/>
    <property type="evidence" value="ECO:0007669"/>
    <property type="project" value="InterPro"/>
</dbReference>
<dbReference type="GO" id="GO:0006782">
    <property type="term" value="P:protoporphyrinogen IX biosynthetic process"/>
    <property type="evidence" value="ECO:0007669"/>
    <property type="project" value="UniProtKB-UniRule"/>
</dbReference>
<dbReference type="CDD" id="cd00610">
    <property type="entry name" value="OAT_like"/>
    <property type="match status" value="1"/>
</dbReference>
<dbReference type="FunFam" id="3.40.640.10:FF:000021">
    <property type="entry name" value="Glutamate-1-semialdehyde 2,1-aminomutase"/>
    <property type="match status" value="1"/>
</dbReference>
<dbReference type="Gene3D" id="3.90.1150.10">
    <property type="entry name" value="Aspartate Aminotransferase, domain 1"/>
    <property type="match status" value="1"/>
</dbReference>
<dbReference type="Gene3D" id="3.40.640.10">
    <property type="entry name" value="Type I PLP-dependent aspartate aminotransferase-like (Major domain)"/>
    <property type="match status" value="1"/>
</dbReference>
<dbReference type="HAMAP" id="MF_00375">
    <property type="entry name" value="HemL_aminotrans_3"/>
    <property type="match status" value="1"/>
</dbReference>
<dbReference type="InterPro" id="IPR004639">
    <property type="entry name" value="4pyrrol_synth_GluAld_NH2Trfase"/>
</dbReference>
<dbReference type="InterPro" id="IPR005814">
    <property type="entry name" value="Aminotrans_3"/>
</dbReference>
<dbReference type="InterPro" id="IPR049704">
    <property type="entry name" value="Aminotrans_3_PPA_site"/>
</dbReference>
<dbReference type="InterPro" id="IPR015424">
    <property type="entry name" value="PyrdxlP-dep_Trfase"/>
</dbReference>
<dbReference type="InterPro" id="IPR015421">
    <property type="entry name" value="PyrdxlP-dep_Trfase_major"/>
</dbReference>
<dbReference type="InterPro" id="IPR015422">
    <property type="entry name" value="PyrdxlP-dep_Trfase_small"/>
</dbReference>
<dbReference type="NCBIfam" id="TIGR00713">
    <property type="entry name" value="hemL"/>
    <property type="match status" value="1"/>
</dbReference>
<dbReference type="NCBIfam" id="NF000818">
    <property type="entry name" value="PRK00062.1"/>
    <property type="match status" value="1"/>
</dbReference>
<dbReference type="PANTHER" id="PTHR43713">
    <property type="entry name" value="GLUTAMATE-1-SEMIALDEHYDE 2,1-AMINOMUTASE"/>
    <property type="match status" value="1"/>
</dbReference>
<dbReference type="PANTHER" id="PTHR43713:SF3">
    <property type="entry name" value="GLUTAMATE-1-SEMIALDEHYDE 2,1-AMINOMUTASE 1, CHLOROPLASTIC-RELATED"/>
    <property type="match status" value="1"/>
</dbReference>
<dbReference type="Pfam" id="PF00202">
    <property type="entry name" value="Aminotran_3"/>
    <property type="match status" value="1"/>
</dbReference>
<dbReference type="SUPFAM" id="SSF53383">
    <property type="entry name" value="PLP-dependent transferases"/>
    <property type="match status" value="1"/>
</dbReference>
<dbReference type="PROSITE" id="PS00600">
    <property type="entry name" value="AA_TRANSFER_CLASS_3"/>
    <property type="match status" value="1"/>
</dbReference>
<evidence type="ECO:0000255" key="1">
    <source>
        <dbReference type="HAMAP-Rule" id="MF_00375"/>
    </source>
</evidence>
<gene>
    <name evidence="1" type="primary">hemL</name>
    <name type="ordered locus">Saci_0779</name>
</gene>
<protein>
    <recommendedName>
        <fullName evidence="1">Glutamate-1-semialdehyde 2,1-aminomutase</fullName>
        <shortName evidence="1">GSA</shortName>
        <ecNumber evidence="1">5.4.3.8</ecNumber>
    </recommendedName>
    <alternativeName>
        <fullName evidence="1">Glutamate-1-semialdehyde aminotransferase</fullName>
        <shortName evidence="1">GSA-AT</shortName>
    </alternativeName>
</protein>
<name>GSA_SULAC</name>